<reference key="1">
    <citation type="journal article" date="1997" name="Nature">
        <title>The nucleotide sequence of Saccharomyces cerevisiae chromosome XVI.</title>
        <authorList>
            <person name="Bussey H."/>
            <person name="Storms R.K."/>
            <person name="Ahmed A."/>
            <person name="Albermann K."/>
            <person name="Allen E."/>
            <person name="Ansorge W."/>
            <person name="Araujo R."/>
            <person name="Aparicio A."/>
            <person name="Barrell B.G."/>
            <person name="Badcock K."/>
            <person name="Benes V."/>
            <person name="Botstein D."/>
            <person name="Bowman S."/>
            <person name="Brueckner M."/>
            <person name="Carpenter J."/>
            <person name="Cherry J.M."/>
            <person name="Chung E."/>
            <person name="Churcher C.M."/>
            <person name="Coster F."/>
            <person name="Davis K."/>
            <person name="Davis R.W."/>
            <person name="Dietrich F.S."/>
            <person name="Delius H."/>
            <person name="DiPaolo T."/>
            <person name="Dubois E."/>
            <person name="Duesterhoeft A."/>
            <person name="Duncan M."/>
            <person name="Floeth M."/>
            <person name="Fortin N."/>
            <person name="Friesen J.D."/>
            <person name="Fritz C."/>
            <person name="Goffeau A."/>
            <person name="Hall J."/>
            <person name="Hebling U."/>
            <person name="Heumann K."/>
            <person name="Hilbert H."/>
            <person name="Hillier L.W."/>
            <person name="Hunicke-Smith S."/>
            <person name="Hyman R.W."/>
            <person name="Johnston M."/>
            <person name="Kalman S."/>
            <person name="Kleine K."/>
            <person name="Komp C."/>
            <person name="Kurdi O."/>
            <person name="Lashkari D."/>
            <person name="Lew H."/>
            <person name="Lin A."/>
            <person name="Lin D."/>
            <person name="Louis E.J."/>
            <person name="Marathe R."/>
            <person name="Messenguy F."/>
            <person name="Mewes H.-W."/>
            <person name="Mirtipati S."/>
            <person name="Moestl D."/>
            <person name="Mueller-Auer S."/>
            <person name="Namath A."/>
            <person name="Nentwich U."/>
            <person name="Oefner P."/>
            <person name="Pearson D."/>
            <person name="Petel F.X."/>
            <person name="Pohl T.M."/>
            <person name="Purnelle B."/>
            <person name="Rajandream M.A."/>
            <person name="Rechmann S."/>
            <person name="Rieger M."/>
            <person name="Riles L."/>
            <person name="Roberts D."/>
            <person name="Schaefer M."/>
            <person name="Scharfe M."/>
            <person name="Scherens B."/>
            <person name="Schramm S."/>
            <person name="Schroeder M."/>
            <person name="Sdicu A.-M."/>
            <person name="Tettelin H."/>
            <person name="Urrestarazu L.A."/>
            <person name="Ushinsky S."/>
            <person name="Vierendeels F."/>
            <person name="Vissers S."/>
            <person name="Voss H."/>
            <person name="Walsh S.V."/>
            <person name="Wambutt R."/>
            <person name="Wang Y."/>
            <person name="Wedler E."/>
            <person name="Wedler H."/>
            <person name="Winnett E."/>
            <person name="Zhong W.-W."/>
            <person name="Zollner A."/>
            <person name="Vo D.H."/>
            <person name="Hani J."/>
        </authorList>
    </citation>
    <scope>NUCLEOTIDE SEQUENCE [LARGE SCALE GENOMIC DNA]</scope>
    <source>
        <strain>ATCC 204508 / S288c</strain>
    </source>
</reference>
<reference key="2">
    <citation type="journal article" date="2014" name="G3 (Bethesda)">
        <title>The reference genome sequence of Saccharomyces cerevisiae: Then and now.</title>
        <authorList>
            <person name="Engel S.R."/>
            <person name="Dietrich F.S."/>
            <person name="Fisk D.G."/>
            <person name="Binkley G."/>
            <person name="Balakrishnan R."/>
            <person name="Costanzo M.C."/>
            <person name="Dwight S.S."/>
            <person name="Hitz B.C."/>
            <person name="Karra K."/>
            <person name="Nash R.S."/>
            <person name="Weng S."/>
            <person name="Wong E.D."/>
            <person name="Lloyd P."/>
            <person name="Skrzypek M.S."/>
            <person name="Miyasato S.R."/>
            <person name="Simison M."/>
            <person name="Cherry J.M."/>
        </authorList>
    </citation>
    <scope>GENOME REANNOTATION</scope>
    <source>
        <strain>ATCC 204508 / S288c</strain>
    </source>
</reference>
<reference key="3">
    <citation type="journal article" date="1999" name="Proc. Natl. Acad. Sci. U.S.A.">
        <title>The Med1 subunit of the yeast mediator complex is involved in both transcriptional activation and repression.</title>
        <authorList>
            <person name="Balciunas D."/>
            <person name="Gaelman C."/>
            <person name="Ronne H."/>
            <person name="Bjoerklund S."/>
        </authorList>
    </citation>
    <scope>PROTEIN SEQUENCE OF 7-11; 79-100; 264-280 AND 515-525</scope>
    <scope>COMPONENT OF MEDIATOR COMPLEX</scope>
</reference>
<reference key="4">
    <citation type="journal article" date="1999" name="Proc. Natl. Acad. Sci. U.S.A.">
        <authorList>
            <person name="Balciunas D."/>
            <person name="Gaelman C."/>
            <person name="Ronne H."/>
            <person name="Bjoerklund S."/>
        </authorList>
    </citation>
    <scope>ERRATUM OF PUBMED:9892641</scope>
</reference>
<reference key="5">
    <citation type="journal article" date="2001" name="J. Biol. Chem.">
        <title>The structural and functional organization of the yeast mediator complex.</title>
        <authorList>
            <person name="Kang J.S."/>
            <person name="Kim S.H."/>
            <person name="Hwang M.S."/>
            <person name="Han S.J."/>
            <person name="Lee Y.C."/>
            <person name="Kim Y.-J."/>
        </authorList>
    </citation>
    <scope>INTERACTION WITH MED4 AND MED7</scope>
    <scope>FUNCTION OF THE MEDIATOR COMPLEX</scope>
    <scope>INTERACTION OF THE MEDIATOR COMPLEX WITH RNA POLYMERASE II</scope>
</reference>
<reference key="6">
    <citation type="journal article" date="2003" name="Nature">
        <title>Global analysis of protein localization in budding yeast.</title>
        <authorList>
            <person name="Huh W.-K."/>
            <person name="Falvo J.V."/>
            <person name="Gerke L.C."/>
            <person name="Carroll A.S."/>
            <person name="Howson R.W."/>
            <person name="Weissman J.S."/>
            <person name="O'Shea E.K."/>
        </authorList>
    </citation>
    <scope>SUBCELLULAR LOCATION [LARGE SCALE ANALYSIS]</scope>
</reference>
<reference key="7">
    <citation type="journal article" date="2003" name="Nature">
        <title>Global analysis of protein expression in yeast.</title>
        <authorList>
            <person name="Ghaemmaghami S."/>
            <person name="Huh W.-K."/>
            <person name="Bower K."/>
            <person name="Howson R.W."/>
            <person name="Belle A."/>
            <person name="Dephoure N."/>
            <person name="O'Shea E.K."/>
            <person name="Weissman J.S."/>
        </authorList>
    </citation>
    <scope>LEVEL OF PROTEIN EXPRESSION [LARGE SCALE ANALYSIS]</scope>
</reference>
<reference key="8">
    <citation type="journal article" date="2004" name="Mol. Cell">
        <title>A unified nomenclature for protein subunits of mediator complexes linking transcriptional regulators to RNA polymerase II.</title>
        <authorList>
            <person name="Bourbon H.-M."/>
            <person name="Aguilera A."/>
            <person name="Ansari A.Z."/>
            <person name="Asturias F.J."/>
            <person name="Berk A.J."/>
            <person name="Bjoerklund S."/>
            <person name="Blackwell T.K."/>
            <person name="Borggrefe T."/>
            <person name="Carey M."/>
            <person name="Carlson M."/>
            <person name="Conaway J.W."/>
            <person name="Conaway R.C."/>
            <person name="Emmons S.W."/>
            <person name="Fondell J.D."/>
            <person name="Freedman L.P."/>
            <person name="Fukasawa T."/>
            <person name="Gustafsson C.M."/>
            <person name="Han M."/>
            <person name="He X."/>
            <person name="Herman P.K."/>
            <person name="Hinnebusch A.G."/>
            <person name="Holmberg S."/>
            <person name="Holstege F.C.P."/>
            <person name="Jaehning J.A."/>
            <person name="Kim Y.-J."/>
            <person name="Kuras L."/>
            <person name="Leutz A."/>
            <person name="Lis J.T."/>
            <person name="Meisterernest M."/>
            <person name="Naeaer A.M."/>
            <person name="Nasmyth K."/>
            <person name="Parvin J.D."/>
            <person name="Ptashne M."/>
            <person name="Reinberg D."/>
            <person name="Ronne H."/>
            <person name="Sadowski I."/>
            <person name="Sakurai H."/>
            <person name="Sipiczki M."/>
            <person name="Sternberg P.W."/>
            <person name="Stillman D.J."/>
            <person name="Strich R."/>
            <person name="Struhl K."/>
            <person name="Svejstrup J.Q."/>
            <person name="Tuck S."/>
            <person name="Winston F."/>
            <person name="Roeder R.G."/>
            <person name="Kornberg R.D."/>
        </authorList>
    </citation>
    <scope>NOMENCLATURE</scope>
</reference>
<reference key="9">
    <citation type="journal article" date="2004" name="Nucleic Acids Res.">
        <title>A high resolution protein interaction map of the yeast Mediator complex.</title>
        <authorList>
            <person name="Guglielmi B."/>
            <person name="van Berkum N.L."/>
            <person name="Klapholz B."/>
            <person name="Bijma T."/>
            <person name="Boube M."/>
            <person name="Boschiero C."/>
            <person name="Bourbon H.-M."/>
            <person name="Holstege F.C.P."/>
            <person name="Werner M."/>
        </authorList>
    </citation>
    <scope>TOPOLOGY OF THE MEDIATOR COMPLEX</scope>
</reference>
<reference key="10">
    <citation type="journal article" date="2005" name="J. Biol. Chem.">
        <title>Preponderance of free mediator in the yeast Saccharomyces cerevisiae.</title>
        <authorList>
            <person name="Takagi Y."/>
            <person name="Chadick J.Z."/>
            <person name="Davis J.A."/>
            <person name="Asturias F.J."/>
        </authorList>
    </citation>
    <scope>CHARACTERIZATION OF THE MEDIATOR COMPLEX</scope>
</reference>
<reference key="11">
    <citation type="journal article" date="2005" name="J. Biol. Chem.">
        <title>Mediator and TFIIH govern carboxyl-terminal domain-dependent transcription in yeast extracts.</title>
        <authorList>
            <person name="Nair D."/>
            <person name="Kim Y."/>
            <person name="Myers L.C."/>
        </authorList>
    </citation>
    <scope>FUNCTION OF THE MEDIATOR COMPLEX</scope>
</reference>
<reference key="12">
    <citation type="journal article" date="2005" name="Mol. Cell">
        <title>Mediator expression profiling epistasis reveals a signal transduction pathway with antagonistic submodules and highly specific downstream targets.</title>
        <authorList>
            <person name="van de Peppel J."/>
            <person name="Kettelarij N."/>
            <person name="van Bakel H."/>
            <person name="Kockelkorn T.T.J.P."/>
            <person name="van Leenen D."/>
            <person name="Holstege F.C.P."/>
        </authorList>
    </citation>
    <scope>FUNCTION</scope>
</reference>
<reference key="13">
    <citation type="journal article" date="2006" name="J. Biol. Chem.">
        <title>Mediator as a general transcription factor.</title>
        <authorList>
            <person name="Takagi Y."/>
            <person name="Kornberg R.D."/>
        </authorList>
    </citation>
    <scope>FUNCTION OF THE MEDIATOR COMPLEX</scope>
</reference>
<reference key="14">
    <citation type="journal article" date="2007" name="J. Biol. Chem.">
        <title>Med19(Rox3) regulates intermodule interactions in the Saccharomyces cerevisiae mediator complex.</title>
        <authorList>
            <person name="Baidoobonso S.M."/>
            <person name="Guidi B.W."/>
            <person name="Myers L.C."/>
        </authorList>
    </citation>
    <scope>INTERACTION WITH SRB5</scope>
    <scope>CHARACTERIZATION OF THE MEDIATOR COMPLEX</scope>
    <scope>INTERACTION OF THE MEDIATOR COMPLEX WITH RNA POLYMERASE II</scope>
</reference>
<reference key="15">
    <citation type="journal article" date="2007" name="J. Proteome Res.">
        <title>Large-scale phosphorylation analysis of alpha-factor-arrested Saccharomyces cerevisiae.</title>
        <authorList>
            <person name="Li X."/>
            <person name="Gerber S.A."/>
            <person name="Rudner A.D."/>
            <person name="Beausoleil S.A."/>
            <person name="Haas W."/>
            <person name="Villen J."/>
            <person name="Elias J.E."/>
            <person name="Gygi S.P."/>
        </authorList>
    </citation>
    <scope>IDENTIFICATION BY MASS SPECTROMETRY [LARGE SCALE ANALYSIS]</scope>
    <source>
        <strain>ADR376</strain>
    </source>
</reference>
<reference key="16">
    <citation type="journal article" date="2008" name="Mol. Cell. Proteomics">
        <title>A multidimensional chromatography technology for in-depth phosphoproteome analysis.</title>
        <authorList>
            <person name="Albuquerque C.P."/>
            <person name="Smolka M.B."/>
            <person name="Payne S.H."/>
            <person name="Bafna V."/>
            <person name="Eng J."/>
            <person name="Zhou H."/>
        </authorList>
    </citation>
    <scope>PHOSPHORYLATION [LARGE SCALE ANALYSIS] AT SER-155</scope>
    <scope>IDENTIFICATION BY MASS SPECTROMETRY [LARGE SCALE ANALYSIS]</scope>
</reference>
<reference key="17">
    <citation type="journal article" date="2009" name="Science">
        <title>Global analysis of Cdk1 substrate phosphorylation sites provides insights into evolution.</title>
        <authorList>
            <person name="Holt L.J."/>
            <person name="Tuch B.B."/>
            <person name="Villen J."/>
            <person name="Johnson A.D."/>
            <person name="Gygi S.P."/>
            <person name="Morgan D.O."/>
        </authorList>
    </citation>
    <scope>PHOSPHORYLATION [LARGE SCALE ANALYSIS] AT SER-155 AND SER-423</scope>
    <scope>IDENTIFICATION BY MASS SPECTROMETRY [LARGE SCALE ANALYSIS]</scope>
</reference>
<reference key="18">
    <citation type="journal article" date="2002" name="Mol. Cell">
        <title>Structure of the yeast RNA polymerase II holoenzyme: mediator conformation and polymerase interaction.</title>
        <authorList>
            <person name="Davis J.A."/>
            <person name="Takagi Y."/>
            <person name="Kornberg R.D."/>
            <person name="Asturias F.J."/>
        </authorList>
    </citation>
    <scope>ELECTRON MICROSCOPY OF MEDIATOR COMPLEX IN COMPLEX WITH RNA POLYMERASE II</scope>
</reference>
<keyword id="KW-0002">3D-structure</keyword>
<keyword id="KW-0010">Activator</keyword>
<keyword id="KW-0903">Direct protein sequencing</keyword>
<keyword id="KW-0539">Nucleus</keyword>
<keyword id="KW-0597">Phosphoprotein</keyword>
<keyword id="KW-1185">Reference proteome</keyword>
<keyword id="KW-0804">Transcription</keyword>
<keyword id="KW-0805">Transcription regulation</keyword>
<protein>
    <recommendedName>
        <fullName>Mediator of RNA polymerase II transcription subunit 1</fullName>
    </recommendedName>
    <alternativeName>
        <fullName>Mediator complex subunit 1</fullName>
    </alternativeName>
</protein>
<proteinExistence type="evidence at protein level"/>
<organism>
    <name type="scientific">Saccharomyces cerevisiae (strain ATCC 204508 / S288c)</name>
    <name type="common">Baker's yeast</name>
    <dbReference type="NCBI Taxonomy" id="559292"/>
    <lineage>
        <taxon>Eukaryota</taxon>
        <taxon>Fungi</taxon>
        <taxon>Dikarya</taxon>
        <taxon>Ascomycota</taxon>
        <taxon>Saccharomycotina</taxon>
        <taxon>Saccharomycetes</taxon>
        <taxon>Saccharomycetales</taxon>
        <taxon>Saccharomycetaceae</taxon>
        <taxon>Saccharomyces</taxon>
    </lineage>
</organism>
<sequence>MVEGDSYVETLDSMIELFKDYKPGSITLENITRLCQTLGLESFTEELSNELSRLSTASKIIVIDVDYNKKQDRIQDVKLVLASNFDNFDYFNQRDGEHEKSNILLNSLTKYPDLKAFHNNLKFLYLLDAYSHIESDSTSHNNGSSDKSLDSSNASFNNQGKLDLFKYFTELSHYIRQCFQDNCCDFKVRTNLNDKFGIYILTQGINGKEVPLAKIYLEENKSDSQYRFYEYIYSQETKSWINESAENFSNGISLVMEIVANAKESNYTDLIWFPEDFISPELIIDKVTCSSNSSSSPPIIDLFSNNNYNSRIQLMNDFTTKLINIKKFDISNDNLDLISEILKWVQWSRIVLQNVFKLVSTPSSNSNSSELEPDYQAPFSTSTKDKNSSTSNTEPIPRSNRHGSVVEASRRRRSSTNKSKRPSITEAMMLKEEGLQQFNLHEILSEPAIEEENGDSIKEHSTTMDGANDLGFTASVSNQENAGTDIVMEDHGVLQGTSQNYGTATADDADIEMKDVSSKPSKPESSVLQLIVSEDHIILDTISECNLYDDVKCWSKFIEKFQDIVS</sequence>
<feature type="chain" id="PRO_0000096372" description="Mediator of RNA polymerase II transcription subunit 1">
    <location>
        <begin position="1"/>
        <end position="566"/>
    </location>
</feature>
<feature type="region of interest" description="Disordered" evidence="1">
    <location>
        <begin position="361"/>
        <end position="425"/>
    </location>
</feature>
<feature type="compositionally biased region" description="Basic residues" evidence="1">
    <location>
        <begin position="410"/>
        <end position="421"/>
    </location>
</feature>
<feature type="modified residue" description="Phosphoserine" evidence="10 11">
    <location>
        <position position="155"/>
    </location>
</feature>
<feature type="modified residue" description="Phosphoserine" evidence="11">
    <location>
        <position position="423"/>
    </location>
</feature>
<evidence type="ECO:0000256" key="1">
    <source>
        <dbReference type="SAM" id="MobiDB-lite"/>
    </source>
</evidence>
<evidence type="ECO:0000269" key="2">
    <source>
    </source>
</evidence>
<evidence type="ECO:0000269" key="3">
    <source>
    </source>
</evidence>
<evidence type="ECO:0000269" key="4">
    <source>
    </source>
</evidence>
<evidence type="ECO:0000269" key="5">
    <source>
    </source>
</evidence>
<evidence type="ECO:0000269" key="6">
    <source>
    </source>
</evidence>
<evidence type="ECO:0000269" key="7">
    <source>
    </source>
</evidence>
<evidence type="ECO:0000269" key="8">
    <source>
    </source>
</evidence>
<evidence type="ECO:0000305" key="9"/>
<evidence type="ECO:0007744" key="10">
    <source>
    </source>
</evidence>
<evidence type="ECO:0007744" key="11">
    <source>
    </source>
</evidence>
<gene>
    <name type="primary">MED1</name>
    <name type="ordered locus">YPR070W</name>
    <name type="ORF">YP9499.25</name>
    <name type="ORF">YPR063W</name>
</gene>
<name>MED1_YEAST</name>
<accession>Q12321</accession>
<accession>D6W474</accession>
<comment type="function">
    <text evidence="2 5 6 7">Component of the Mediator complex, a coactivator involved in the regulated transcription of nearly all RNA polymerase II-dependent genes. Mediator functions as a bridge to convey information from gene-specific regulatory proteins to the basal RNA polymerase II transcription machinery. The Mediator complex, having a compact conformation in its free form, is recruited to promoters by direct interactions with regulatory proteins and serves for the assembly of a functional preinitiation complex with RNA polymerase II and the general transcription factors. The Mediator complex unfolds to an extended conformation and partially surrounds RNA polymerase II, specifically interacting with the unphosphorylated form of the C-terminal domain (CTD) of RNA polymerase II. The Mediator complex dissociates from the RNA polymerase II holoenzyme and stays at the promoter when transcriptional elongation begins.</text>
</comment>
<comment type="subunit">
    <text evidence="2 8">Component of the Mediator complex, which is composed of at least 21 subunits that form three structurally distinct submodules. The Mediator head module contains MED6, MED8, MED11, SRB4/MED17, SRB5/MED18, ROX3/MED19, SRB2/MED20 and SRB6/MED22, the middle module contains MED1, MED4, NUT1/MED5, MED7, CSE2/MED9, NUT2/MED10, SRB7/MED21 and SOH1/MED31, and the tail module contains MED2, PGD1/MED3, RGR1/MED14, GAL11/MED15 and SIN4/MED16. The head and the middle modules interact directly with RNA polymerase II, whereas the elongated tail module interacts with gene-specific regulatory proteins. MED1 interacts directly with MED4 and MED7.</text>
</comment>
<comment type="interaction">
    <interactant intactId="EBI-32854">
        <id>Q12321</id>
    </interactant>
    <interactant intactId="EBI-5174">
        <id>P33308</id>
        <label>CSE2</label>
    </interactant>
    <organismsDiffer>false</organismsDiffer>
    <experiments>3</experiments>
</comment>
<comment type="interaction">
    <interactant intactId="EBI-32854">
        <id>Q12321</id>
    </interactant>
    <interactant intactId="EBI-31503">
        <id>Q12343</id>
        <label>MED4</label>
    </interactant>
    <organismsDiffer>false</organismsDiffer>
    <experiments>3</experiments>
</comment>
<comment type="interaction">
    <interactant intactId="EBI-32854">
        <id>Q12321</id>
    </interactant>
    <interactant intactId="EBI-10674">
        <id>Q08278</id>
        <label>MED7</label>
    </interactant>
    <organismsDiffer>false</organismsDiffer>
    <experiments>4</experiments>
</comment>
<comment type="interaction">
    <interactant intactId="EBI-32854">
        <id>Q12321</id>
    </interactant>
    <interactant intactId="EBI-12407">
        <id>P53114</id>
        <label>NUT1</label>
    </interactant>
    <organismsDiffer>false</organismsDiffer>
    <experiments>4</experiments>
</comment>
<comment type="interaction">
    <interactant intactId="EBI-32854">
        <id>Q12321</id>
    </interactant>
    <interactant intactId="EBI-15087">
        <id>P19263</id>
        <label>RGR1</label>
    </interactant>
    <organismsDiffer>false</organismsDiffer>
    <experiments>4</experiments>
</comment>
<comment type="interaction">
    <interactant intactId="EBI-32854">
        <id>Q12321</id>
    </interactant>
    <interactant intactId="EBI-17658">
        <id>P38633</id>
        <label>SOH1</label>
    </interactant>
    <organismsDiffer>false</organismsDiffer>
    <experiments>3</experiments>
</comment>
<comment type="subcellular location">
    <subcellularLocation>
        <location evidence="3">Nucleus</location>
    </subcellularLocation>
</comment>
<comment type="miscellaneous">
    <text evidence="4">Present with 4675 molecules/cell in log phase SD medium.</text>
</comment>
<comment type="similarity">
    <text evidence="9">Belongs to the Mediator complex subunit 1 family.</text>
</comment>
<dbReference type="EMBL" id="Z71255">
    <property type="protein sequence ID" value="CAA94978.1"/>
    <property type="molecule type" value="Genomic_DNA"/>
</dbReference>
<dbReference type="EMBL" id="U51033">
    <property type="protein sequence ID" value="AAB68121.1"/>
    <property type="molecule type" value="Genomic_DNA"/>
</dbReference>
<dbReference type="EMBL" id="Z49219">
    <property type="protein sequence ID" value="CAA89187.1"/>
    <property type="molecule type" value="Genomic_DNA"/>
</dbReference>
<dbReference type="EMBL" id="BK006949">
    <property type="protein sequence ID" value="DAA11490.1"/>
    <property type="molecule type" value="Genomic_DNA"/>
</dbReference>
<dbReference type="PIR" id="S54091">
    <property type="entry name" value="S54091"/>
</dbReference>
<dbReference type="RefSeq" id="NP_015395.1">
    <property type="nucleotide sequence ID" value="NM_001184167.1"/>
</dbReference>
<dbReference type="PDB" id="7UI9">
    <property type="method" value="EM"/>
    <property type="resolution" value="3.30 A"/>
    <property type="chains" value="a=1-566"/>
</dbReference>
<dbReference type="PDB" id="7UIF">
    <property type="method" value="EM"/>
    <property type="resolution" value="4.60 A"/>
    <property type="chains" value="a=1-566"/>
</dbReference>
<dbReference type="PDB" id="7UIG">
    <property type="method" value="EM"/>
    <property type="resolution" value="4.30 A"/>
    <property type="chains" value="a=1-566"/>
</dbReference>
<dbReference type="PDB" id="7UIL">
    <property type="method" value="EM"/>
    <property type="resolution" value="4.30 A"/>
    <property type="chains" value="a=1-566"/>
</dbReference>
<dbReference type="PDB" id="7UIO">
    <property type="method" value="EM"/>
    <property type="resolution" value="3.30 A"/>
    <property type="chains" value="Aa/Ba=1-566"/>
</dbReference>
<dbReference type="PDB" id="8CEN">
    <property type="method" value="EM"/>
    <property type="resolution" value="3.00 A"/>
    <property type="chains" value="p=1-566"/>
</dbReference>
<dbReference type="PDB" id="8CEO">
    <property type="method" value="EM"/>
    <property type="resolution" value="3.60 A"/>
    <property type="chains" value="p=1-566"/>
</dbReference>
<dbReference type="PDBsum" id="7UI9"/>
<dbReference type="PDBsum" id="7UIF"/>
<dbReference type="PDBsum" id="7UIG"/>
<dbReference type="PDBsum" id="7UIL"/>
<dbReference type="PDBsum" id="7UIO"/>
<dbReference type="PDBsum" id="8CEN"/>
<dbReference type="PDBsum" id="8CEO"/>
<dbReference type="EMDB" id="EMD-26542"/>
<dbReference type="EMDB" id="EMD-26544"/>
<dbReference type="EMDB" id="EMD-26545"/>
<dbReference type="EMDB" id="EMD-26548"/>
<dbReference type="EMDB" id="EMD-26551"/>
<dbReference type="SMR" id="Q12321"/>
<dbReference type="BioGRID" id="36242">
    <property type="interactions" value="649"/>
</dbReference>
<dbReference type="ComplexPortal" id="CPX-3226">
    <property type="entry name" value="Core mediator complex"/>
</dbReference>
<dbReference type="DIP" id="DIP-1690N"/>
<dbReference type="FunCoup" id="Q12321">
    <property type="interactions" value="242"/>
</dbReference>
<dbReference type="IntAct" id="Q12321">
    <property type="interactions" value="43"/>
</dbReference>
<dbReference type="MINT" id="Q12321"/>
<dbReference type="STRING" id="4932.YPR070W"/>
<dbReference type="iPTMnet" id="Q12321"/>
<dbReference type="PaxDb" id="4932-YPR070W"/>
<dbReference type="PeptideAtlas" id="Q12321"/>
<dbReference type="EnsemblFungi" id="YPR070W_mRNA">
    <property type="protein sequence ID" value="YPR070W"/>
    <property type="gene ID" value="YPR070W"/>
</dbReference>
<dbReference type="GeneID" id="856183"/>
<dbReference type="KEGG" id="sce:YPR070W"/>
<dbReference type="AGR" id="SGD:S000006274"/>
<dbReference type="SGD" id="S000006274">
    <property type="gene designation" value="MED1"/>
</dbReference>
<dbReference type="VEuPathDB" id="FungiDB:YPR070W"/>
<dbReference type="eggNOG" id="ENOG502QW0Y">
    <property type="taxonomic scope" value="Eukaryota"/>
</dbReference>
<dbReference type="HOGENOM" id="CLU_021764_0_0_1"/>
<dbReference type="InParanoid" id="Q12321"/>
<dbReference type="OMA" id="NDKFGIY"/>
<dbReference type="OrthoDB" id="5310959at2759"/>
<dbReference type="BioCyc" id="YEAST:G3O-34217-MONOMER"/>
<dbReference type="BioGRID-ORCS" id="856183">
    <property type="hits" value="0 hits in 10 CRISPR screens"/>
</dbReference>
<dbReference type="PRO" id="PR:Q12321"/>
<dbReference type="Proteomes" id="UP000002311">
    <property type="component" value="Chromosome XVI"/>
</dbReference>
<dbReference type="RNAct" id="Q12321">
    <property type="molecule type" value="protein"/>
</dbReference>
<dbReference type="GO" id="GO:0070847">
    <property type="term" value="C:core mediator complex"/>
    <property type="evidence" value="ECO:0000314"/>
    <property type="project" value="SGD"/>
</dbReference>
<dbReference type="GO" id="GO:0016592">
    <property type="term" value="C:mediator complex"/>
    <property type="evidence" value="ECO:0007669"/>
    <property type="project" value="InterPro"/>
</dbReference>
<dbReference type="GO" id="GO:0005634">
    <property type="term" value="C:nucleus"/>
    <property type="evidence" value="ECO:0000314"/>
    <property type="project" value="ComplexPortal"/>
</dbReference>
<dbReference type="GO" id="GO:0003712">
    <property type="term" value="F:transcription coregulator activity"/>
    <property type="evidence" value="ECO:0007669"/>
    <property type="project" value="InterPro"/>
</dbReference>
<dbReference type="GO" id="GO:0000122">
    <property type="term" value="P:negative regulation of transcription by RNA polymerase II"/>
    <property type="evidence" value="ECO:0000315"/>
    <property type="project" value="SGD"/>
</dbReference>
<dbReference type="GO" id="GO:0045944">
    <property type="term" value="P:positive regulation of transcription by RNA polymerase II"/>
    <property type="evidence" value="ECO:0000315"/>
    <property type="project" value="SGD"/>
</dbReference>
<dbReference type="GO" id="GO:0032968">
    <property type="term" value="P:positive regulation of transcription elongation by RNA polymerase II"/>
    <property type="evidence" value="ECO:0000314"/>
    <property type="project" value="ComplexPortal"/>
</dbReference>
<dbReference type="GO" id="GO:0060261">
    <property type="term" value="P:positive regulation of transcription initiation by RNA polymerase II"/>
    <property type="evidence" value="ECO:0000314"/>
    <property type="project" value="ComplexPortal"/>
</dbReference>
<dbReference type="GO" id="GO:0051123">
    <property type="term" value="P:RNA polymerase II preinitiation complex assembly"/>
    <property type="evidence" value="ECO:0000314"/>
    <property type="project" value="ComplexPortal"/>
</dbReference>
<dbReference type="InterPro" id="IPR019680">
    <property type="entry name" value="Mediator_Med1"/>
</dbReference>
<dbReference type="Pfam" id="PF10744">
    <property type="entry name" value="Med1"/>
    <property type="match status" value="1"/>
</dbReference>